<dbReference type="EMBL" id="AF000720">
    <property type="protein sequence ID" value="AAB88255.1"/>
    <property type="molecule type" value="Genomic_RNA"/>
</dbReference>
<dbReference type="PIR" id="T02302">
    <property type="entry name" value="T02302"/>
</dbReference>
<dbReference type="RefSeq" id="NP_690889.1">
    <property type="nucleotide sequence ID" value="NC_004180.1"/>
</dbReference>
<dbReference type="GeneID" id="993308"/>
<dbReference type="KEGG" id="vg:993308"/>
<dbReference type="Proteomes" id="UP000001675">
    <property type="component" value="Genome"/>
</dbReference>
<dbReference type="GO" id="GO:0030430">
    <property type="term" value="C:host cell cytoplasm"/>
    <property type="evidence" value="ECO:0007669"/>
    <property type="project" value="UniProtKB-SubCell"/>
</dbReference>
<sequence length="602" mass="67293">MFGYLQLINPTTDIYIKDYGNFSGIVAHQAYDPVRRDHMLLRSMKLHFGPNSKLLWLGDFHAITLSHANMIFGASSVGFKGVNVSTLPPDTLTTGIRPRPVVTMDFAQLKGFYSDLAQKEDYIMYFHDMVKFVSQTGGAPVSLRDVFLWISESVTGPVVIRTDCVTGCNNLWPSGSGHFYFPYERKTKFRYGTFVECGKNLTWSEGPQWDVKSYVVGFNFVTRANSLLGGGFDEVCYRLMMQAEVPRQVAEQGLTLEQAVRKLASEHHMSRPQLTSRRVPGITDQTKYEAYVVCGPFRTGQVVADSLQMAEDLAWREMLGTLKTLIHDEARQTKGCCXRCWPGELYLINIESAGFREGASAAAAYQAGFLRAFYGCLNTSVCSFSSLDDGLRWLCTRLSTKSIGAKGRTVVLFGCHSEGEVLADGFGKTYSAAEAREQVALSGKIGGSAQVIVVWQRCRESKLQRLLPELAMVSYVPEEVVAGFKRVRELETYPQWCLWLYRSMIESMGGIDVGVRDASPLTESGVVYQVEAAQYGMRTTRVRRADGTLDYQGLSWTSLLMLLLGHYGADQTYEALRVSSMFIRAREVGWRKRGTFSCIVST</sequence>
<organismHost>
    <name type="scientific">Callospermophilus lateralis</name>
    <name type="common">Golden-mantled ground squirrel</name>
    <name type="synonym">Spermophilus lateralis</name>
    <dbReference type="NCBI Taxonomy" id="76772"/>
</organismHost>
<organismHost>
    <name type="scientific">Dermacentor andersoni</name>
    <name type="common">Rocky mountain wood tick</name>
    <dbReference type="NCBI Taxonomy" id="34620"/>
</organismHost>
<organismHost>
    <name type="scientific">Erethizon dorsatum</name>
    <name type="common">North American porcupine</name>
    <name type="synonym">Hystrix dorsata</name>
    <dbReference type="NCBI Taxonomy" id="34844"/>
</organismHost>
<organismHost>
    <name type="scientific">Homo sapiens</name>
    <name type="common">Human</name>
    <dbReference type="NCBI Taxonomy" id="9606"/>
</organismHost>
<organismHost>
    <name type="scientific">Neotoma cinerea</name>
    <name type="common">Bushy-tailed woodrat</name>
    <name type="synonym">Mus cinereus</name>
    <dbReference type="NCBI Taxonomy" id="105147"/>
</organismHost>
<organismHost>
    <name type="scientific">Peromyscus maniculatus</name>
    <name type="common">North American deer mouse</name>
    <dbReference type="NCBI Taxonomy" id="10042"/>
</organismHost>
<proteinExistence type="predicted"/>
<accession>O55265</accession>
<name>VP9P_CTFVL</name>
<protein>
    <recommendedName>
        <fullName>Non structural protein VP9'</fullName>
    </recommendedName>
</protein>
<feature type="chain" id="PRO_0000403198" description="Non structural protein VP9'">
    <location>
        <begin position="1"/>
        <end position="602"/>
    </location>
</feature>
<organism>
    <name type="scientific">Colorado tick fever virus (strain USA/Florio N-7180)</name>
    <name type="common">CTFV</name>
    <dbReference type="NCBI Taxonomy" id="648168"/>
    <lineage>
        <taxon>Viruses</taxon>
        <taxon>Riboviria</taxon>
        <taxon>Orthornavirae</taxon>
        <taxon>Duplornaviricota</taxon>
        <taxon>Resentoviricetes</taxon>
        <taxon>Reovirales</taxon>
        <taxon>Spinareoviridae</taxon>
        <taxon>Coltivirus</taxon>
        <taxon>Colorado tick fever coltivirus</taxon>
    </lineage>
</organism>
<comment type="subcellular location">
    <subcellularLocation>
        <location evidence="1">Host cytoplasm</location>
    </subcellularLocation>
</comment>
<comment type="miscellaneous">
    <text>The protein VP9' may be produced by suppression of termination.</text>
</comment>
<evidence type="ECO:0000269" key="1">
    <source>
    </source>
</evidence>
<reference key="1">
    <citation type="journal article" date="1997" name="J. Gen. Virol.">
        <title>Complete nucleotide sequence of Colorado tick fever virus segments M6, S1 and S2.</title>
        <authorList>
            <person name="Attoui H."/>
            <person name="De Micco P."/>
            <person name="de Lamballerie X."/>
        </authorList>
    </citation>
    <scope>NUCLEOTIDE SEQUENCE [GENOMIC RNA]</scope>
</reference>
<reference key="2">
    <citation type="journal article" date="2004" name="J. Gen. Virol.">
        <title>Termination and read-through proteins encoded by genome segment 9 of Colorado tick fever virus.</title>
        <authorList>
            <person name="Mohd Jaafar F."/>
            <person name="Attoui H."/>
            <person name="De Micco P."/>
            <person name="De Lamballerie X."/>
        </authorList>
    </citation>
    <scope>SUBCELLULAR LOCATION</scope>
</reference>
<keyword id="KW-1035">Host cytoplasm</keyword>
<keyword id="KW-1185">Reference proteome</keyword>
<keyword id="KW-1159">RNA suppression of termination</keyword>